<accession>B3E9A1</accession>
<dbReference type="EC" id="1.1.1.94" evidence="1"/>
<dbReference type="EMBL" id="CP001089">
    <property type="protein sequence ID" value="ACD93767.1"/>
    <property type="molecule type" value="Genomic_DNA"/>
</dbReference>
<dbReference type="SMR" id="B3E9A1"/>
<dbReference type="STRING" id="398767.Glov_0029"/>
<dbReference type="KEGG" id="glo:Glov_0029"/>
<dbReference type="eggNOG" id="COG0240">
    <property type="taxonomic scope" value="Bacteria"/>
</dbReference>
<dbReference type="HOGENOM" id="CLU_033449_0_2_7"/>
<dbReference type="OrthoDB" id="9812273at2"/>
<dbReference type="UniPathway" id="UPA00940"/>
<dbReference type="Proteomes" id="UP000002420">
    <property type="component" value="Chromosome"/>
</dbReference>
<dbReference type="GO" id="GO:0005829">
    <property type="term" value="C:cytosol"/>
    <property type="evidence" value="ECO:0007669"/>
    <property type="project" value="TreeGrafter"/>
</dbReference>
<dbReference type="GO" id="GO:0047952">
    <property type="term" value="F:glycerol-3-phosphate dehydrogenase [NAD(P)+] activity"/>
    <property type="evidence" value="ECO:0007669"/>
    <property type="project" value="UniProtKB-UniRule"/>
</dbReference>
<dbReference type="GO" id="GO:0051287">
    <property type="term" value="F:NAD binding"/>
    <property type="evidence" value="ECO:0007669"/>
    <property type="project" value="InterPro"/>
</dbReference>
<dbReference type="GO" id="GO:0005975">
    <property type="term" value="P:carbohydrate metabolic process"/>
    <property type="evidence" value="ECO:0007669"/>
    <property type="project" value="InterPro"/>
</dbReference>
<dbReference type="GO" id="GO:0046167">
    <property type="term" value="P:glycerol-3-phosphate biosynthetic process"/>
    <property type="evidence" value="ECO:0007669"/>
    <property type="project" value="UniProtKB-UniRule"/>
</dbReference>
<dbReference type="GO" id="GO:0046168">
    <property type="term" value="P:glycerol-3-phosphate catabolic process"/>
    <property type="evidence" value="ECO:0007669"/>
    <property type="project" value="InterPro"/>
</dbReference>
<dbReference type="GO" id="GO:0006650">
    <property type="term" value="P:glycerophospholipid metabolic process"/>
    <property type="evidence" value="ECO:0007669"/>
    <property type="project" value="UniProtKB-UniRule"/>
</dbReference>
<dbReference type="GO" id="GO:0008654">
    <property type="term" value="P:phospholipid biosynthetic process"/>
    <property type="evidence" value="ECO:0007669"/>
    <property type="project" value="UniProtKB-KW"/>
</dbReference>
<dbReference type="FunFam" id="1.10.1040.10:FF:000001">
    <property type="entry name" value="Glycerol-3-phosphate dehydrogenase [NAD(P)+]"/>
    <property type="match status" value="1"/>
</dbReference>
<dbReference type="FunFam" id="3.40.50.720:FF:000019">
    <property type="entry name" value="Glycerol-3-phosphate dehydrogenase [NAD(P)+]"/>
    <property type="match status" value="1"/>
</dbReference>
<dbReference type="Gene3D" id="1.10.1040.10">
    <property type="entry name" value="N-(1-d-carboxylethyl)-l-norvaline Dehydrogenase, domain 2"/>
    <property type="match status" value="1"/>
</dbReference>
<dbReference type="Gene3D" id="3.40.50.720">
    <property type="entry name" value="NAD(P)-binding Rossmann-like Domain"/>
    <property type="match status" value="1"/>
</dbReference>
<dbReference type="HAMAP" id="MF_00394">
    <property type="entry name" value="NAD_Glyc3P_dehydrog"/>
    <property type="match status" value="1"/>
</dbReference>
<dbReference type="InterPro" id="IPR008927">
    <property type="entry name" value="6-PGluconate_DH-like_C_sf"/>
</dbReference>
<dbReference type="InterPro" id="IPR013328">
    <property type="entry name" value="6PGD_dom2"/>
</dbReference>
<dbReference type="InterPro" id="IPR006168">
    <property type="entry name" value="G3P_DH_NAD-dep"/>
</dbReference>
<dbReference type="InterPro" id="IPR006109">
    <property type="entry name" value="G3P_DH_NAD-dep_C"/>
</dbReference>
<dbReference type="InterPro" id="IPR011128">
    <property type="entry name" value="G3P_DH_NAD-dep_N"/>
</dbReference>
<dbReference type="InterPro" id="IPR036291">
    <property type="entry name" value="NAD(P)-bd_dom_sf"/>
</dbReference>
<dbReference type="NCBIfam" id="NF000940">
    <property type="entry name" value="PRK00094.1-2"/>
    <property type="match status" value="1"/>
</dbReference>
<dbReference type="NCBIfam" id="NF000942">
    <property type="entry name" value="PRK00094.1-4"/>
    <property type="match status" value="1"/>
</dbReference>
<dbReference type="PANTHER" id="PTHR11728">
    <property type="entry name" value="GLYCEROL-3-PHOSPHATE DEHYDROGENASE"/>
    <property type="match status" value="1"/>
</dbReference>
<dbReference type="PANTHER" id="PTHR11728:SF1">
    <property type="entry name" value="GLYCEROL-3-PHOSPHATE DEHYDROGENASE [NAD(+)] 2, CHLOROPLASTIC"/>
    <property type="match status" value="1"/>
</dbReference>
<dbReference type="Pfam" id="PF07479">
    <property type="entry name" value="NAD_Gly3P_dh_C"/>
    <property type="match status" value="1"/>
</dbReference>
<dbReference type="Pfam" id="PF01210">
    <property type="entry name" value="NAD_Gly3P_dh_N"/>
    <property type="match status" value="1"/>
</dbReference>
<dbReference type="PIRSF" id="PIRSF000114">
    <property type="entry name" value="Glycerol-3-P_dh"/>
    <property type="match status" value="1"/>
</dbReference>
<dbReference type="PRINTS" id="PR00077">
    <property type="entry name" value="GPDHDRGNASE"/>
</dbReference>
<dbReference type="SUPFAM" id="SSF48179">
    <property type="entry name" value="6-phosphogluconate dehydrogenase C-terminal domain-like"/>
    <property type="match status" value="1"/>
</dbReference>
<dbReference type="SUPFAM" id="SSF51735">
    <property type="entry name" value="NAD(P)-binding Rossmann-fold domains"/>
    <property type="match status" value="1"/>
</dbReference>
<dbReference type="PROSITE" id="PS00957">
    <property type="entry name" value="NAD_G3PDH"/>
    <property type="match status" value="1"/>
</dbReference>
<gene>
    <name evidence="1" type="primary">gpsA</name>
    <name type="ordered locus">Glov_0029</name>
</gene>
<sequence length="333" mass="34376">MKIGVIGAGSWGTALANVVAANGHDTTLWAYEPELVTGMAATRVNHLFLPGIELHPGLNYTGALAEAVSGAELVLLVTPTQVMRNLLADLAGSIAPTAILASASKGIELGTLCTVSQICCQVLGDAVRERFVALSGPTFAKEVALGLPSLIVAGSANDAAAHTVQAAFSNPVFRVYTSDDAIGVELGGAVKNVIAIAAGISDGLGFGHNTRAALITRGLAEMKRLGRAMGAQDATFAGLAGMGDLVLTCTGDLSRNRTVGVKLGQGLTLEVIMAEMRMVAEGVKSAESVNALAQKLGVEMPITQKVYEILYGNKPARQAVLELMSRDLKPEQA</sequence>
<evidence type="ECO:0000255" key="1">
    <source>
        <dbReference type="HAMAP-Rule" id="MF_00394"/>
    </source>
</evidence>
<feature type="chain" id="PRO_1000190154" description="Glycerol-3-phosphate dehydrogenase [NAD(P)+]">
    <location>
        <begin position="1"/>
        <end position="333"/>
    </location>
</feature>
<feature type="active site" description="Proton acceptor" evidence="1">
    <location>
        <position position="191"/>
    </location>
</feature>
<feature type="binding site" evidence="1">
    <location>
        <position position="10"/>
    </location>
    <ligand>
        <name>NADPH</name>
        <dbReference type="ChEBI" id="CHEBI:57783"/>
    </ligand>
</feature>
<feature type="binding site" evidence="1">
    <location>
        <position position="11"/>
    </location>
    <ligand>
        <name>NADPH</name>
        <dbReference type="ChEBI" id="CHEBI:57783"/>
    </ligand>
</feature>
<feature type="binding site" evidence="1">
    <location>
        <position position="105"/>
    </location>
    <ligand>
        <name>NADPH</name>
        <dbReference type="ChEBI" id="CHEBI:57783"/>
    </ligand>
</feature>
<feature type="binding site" evidence="1">
    <location>
        <position position="105"/>
    </location>
    <ligand>
        <name>sn-glycerol 3-phosphate</name>
        <dbReference type="ChEBI" id="CHEBI:57597"/>
    </ligand>
</feature>
<feature type="binding site" evidence="1">
    <location>
        <position position="136"/>
    </location>
    <ligand>
        <name>sn-glycerol 3-phosphate</name>
        <dbReference type="ChEBI" id="CHEBI:57597"/>
    </ligand>
</feature>
<feature type="binding site" evidence="1">
    <location>
        <position position="138"/>
    </location>
    <ligand>
        <name>sn-glycerol 3-phosphate</name>
        <dbReference type="ChEBI" id="CHEBI:57597"/>
    </ligand>
</feature>
<feature type="binding site" evidence="1">
    <location>
        <position position="140"/>
    </location>
    <ligand>
        <name>NADPH</name>
        <dbReference type="ChEBI" id="CHEBI:57783"/>
    </ligand>
</feature>
<feature type="binding site" evidence="1">
    <location>
        <position position="191"/>
    </location>
    <ligand>
        <name>sn-glycerol 3-phosphate</name>
        <dbReference type="ChEBI" id="CHEBI:57597"/>
    </ligand>
</feature>
<feature type="binding site" evidence="1">
    <location>
        <position position="244"/>
    </location>
    <ligand>
        <name>sn-glycerol 3-phosphate</name>
        <dbReference type="ChEBI" id="CHEBI:57597"/>
    </ligand>
</feature>
<feature type="binding site" evidence="1">
    <location>
        <position position="254"/>
    </location>
    <ligand>
        <name>sn-glycerol 3-phosphate</name>
        <dbReference type="ChEBI" id="CHEBI:57597"/>
    </ligand>
</feature>
<feature type="binding site" evidence="1">
    <location>
        <position position="255"/>
    </location>
    <ligand>
        <name>NADPH</name>
        <dbReference type="ChEBI" id="CHEBI:57783"/>
    </ligand>
</feature>
<feature type="binding site" evidence="1">
    <location>
        <position position="255"/>
    </location>
    <ligand>
        <name>sn-glycerol 3-phosphate</name>
        <dbReference type="ChEBI" id="CHEBI:57597"/>
    </ligand>
</feature>
<feature type="binding site" evidence="1">
    <location>
        <position position="256"/>
    </location>
    <ligand>
        <name>sn-glycerol 3-phosphate</name>
        <dbReference type="ChEBI" id="CHEBI:57597"/>
    </ligand>
</feature>
<feature type="binding site" evidence="1">
    <location>
        <position position="279"/>
    </location>
    <ligand>
        <name>NADPH</name>
        <dbReference type="ChEBI" id="CHEBI:57783"/>
    </ligand>
</feature>
<feature type="binding site" evidence="1">
    <location>
        <position position="281"/>
    </location>
    <ligand>
        <name>NADPH</name>
        <dbReference type="ChEBI" id="CHEBI:57783"/>
    </ligand>
</feature>
<proteinExistence type="inferred from homology"/>
<name>GPDA_TRIL1</name>
<keyword id="KW-0963">Cytoplasm</keyword>
<keyword id="KW-0444">Lipid biosynthesis</keyword>
<keyword id="KW-0443">Lipid metabolism</keyword>
<keyword id="KW-0520">NAD</keyword>
<keyword id="KW-0521">NADP</keyword>
<keyword id="KW-0547">Nucleotide-binding</keyword>
<keyword id="KW-0560">Oxidoreductase</keyword>
<keyword id="KW-0594">Phospholipid biosynthesis</keyword>
<keyword id="KW-1208">Phospholipid metabolism</keyword>
<keyword id="KW-1185">Reference proteome</keyword>
<organism>
    <name type="scientific">Trichlorobacter lovleyi (strain ATCC BAA-1151 / DSM 17278 / SZ)</name>
    <name type="common">Geobacter lovleyi</name>
    <dbReference type="NCBI Taxonomy" id="398767"/>
    <lineage>
        <taxon>Bacteria</taxon>
        <taxon>Pseudomonadati</taxon>
        <taxon>Thermodesulfobacteriota</taxon>
        <taxon>Desulfuromonadia</taxon>
        <taxon>Geobacterales</taxon>
        <taxon>Geobacteraceae</taxon>
        <taxon>Trichlorobacter</taxon>
    </lineage>
</organism>
<protein>
    <recommendedName>
        <fullName evidence="1">Glycerol-3-phosphate dehydrogenase [NAD(P)+]</fullName>
        <ecNumber evidence="1">1.1.1.94</ecNumber>
    </recommendedName>
    <alternativeName>
        <fullName evidence="1">NAD(P)(+)-dependent glycerol-3-phosphate dehydrogenase</fullName>
    </alternativeName>
    <alternativeName>
        <fullName evidence="1">NAD(P)H-dependent dihydroxyacetone-phosphate reductase</fullName>
    </alternativeName>
</protein>
<reference key="1">
    <citation type="submission" date="2008-05" db="EMBL/GenBank/DDBJ databases">
        <title>Complete sequence of chromosome of Geobacter lovleyi SZ.</title>
        <authorList>
            <consortium name="US DOE Joint Genome Institute"/>
            <person name="Lucas S."/>
            <person name="Copeland A."/>
            <person name="Lapidus A."/>
            <person name="Glavina del Rio T."/>
            <person name="Dalin E."/>
            <person name="Tice H."/>
            <person name="Bruce D."/>
            <person name="Goodwin L."/>
            <person name="Pitluck S."/>
            <person name="Chertkov O."/>
            <person name="Meincke L."/>
            <person name="Brettin T."/>
            <person name="Detter J.C."/>
            <person name="Han C."/>
            <person name="Tapia R."/>
            <person name="Kuske C.R."/>
            <person name="Schmutz J."/>
            <person name="Larimer F."/>
            <person name="Land M."/>
            <person name="Hauser L."/>
            <person name="Kyrpides N."/>
            <person name="Mikhailova N."/>
            <person name="Sung Y."/>
            <person name="Fletcher K.E."/>
            <person name="Ritalahti K.M."/>
            <person name="Loeffler F.E."/>
            <person name="Richardson P."/>
        </authorList>
    </citation>
    <scope>NUCLEOTIDE SEQUENCE [LARGE SCALE GENOMIC DNA]</scope>
    <source>
        <strain>ATCC BAA-1151 / DSM 17278 / SZ</strain>
    </source>
</reference>
<comment type="function">
    <text evidence="1">Catalyzes the reduction of the glycolytic intermediate dihydroxyacetone phosphate (DHAP) to sn-glycerol 3-phosphate (G3P), the key precursor for phospholipid synthesis.</text>
</comment>
<comment type="catalytic activity">
    <reaction evidence="1">
        <text>sn-glycerol 3-phosphate + NAD(+) = dihydroxyacetone phosphate + NADH + H(+)</text>
        <dbReference type="Rhea" id="RHEA:11092"/>
        <dbReference type="ChEBI" id="CHEBI:15378"/>
        <dbReference type="ChEBI" id="CHEBI:57540"/>
        <dbReference type="ChEBI" id="CHEBI:57597"/>
        <dbReference type="ChEBI" id="CHEBI:57642"/>
        <dbReference type="ChEBI" id="CHEBI:57945"/>
        <dbReference type="EC" id="1.1.1.94"/>
    </reaction>
    <physiologicalReaction direction="right-to-left" evidence="1">
        <dbReference type="Rhea" id="RHEA:11094"/>
    </physiologicalReaction>
</comment>
<comment type="catalytic activity">
    <reaction evidence="1">
        <text>sn-glycerol 3-phosphate + NADP(+) = dihydroxyacetone phosphate + NADPH + H(+)</text>
        <dbReference type="Rhea" id="RHEA:11096"/>
        <dbReference type="ChEBI" id="CHEBI:15378"/>
        <dbReference type="ChEBI" id="CHEBI:57597"/>
        <dbReference type="ChEBI" id="CHEBI:57642"/>
        <dbReference type="ChEBI" id="CHEBI:57783"/>
        <dbReference type="ChEBI" id="CHEBI:58349"/>
        <dbReference type="EC" id="1.1.1.94"/>
    </reaction>
    <physiologicalReaction direction="right-to-left" evidence="1">
        <dbReference type="Rhea" id="RHEA:11098"/>
    </physiologicalReaction>
</comment>
<comment type="pathway">
    <text evidence="1">Membrane lipid metabolism; glycerophospholipid metabolism.</text>
</comment>
<comment type="subcellular location">
    <subcellularLocation>
        <location evidence="1">Cytoplasm</location>
    </subcellularLocation>
</comment>
<comment type="similarity">
    <text evidence="1">Belongs to the NAD-dependent glycerol-3-phosphate dehydrogenase family.</text>
</comment>